<sequence length="261" mass="27944">MSLKKSPFFELRSGSVDTLLFTVKTTDLDALRAELVKRFEATPEFFADDVVAIDVRRLADGERVALADIRQMLNDVRMRPVGVVALATQGWAGEAGLPLLEARDRRAPAAKPADEAEPAAVPAVETAAAPAAAAAPEQPSEPAPTLVQAGGQTLVIDRPLRSGQQIYAKGDLVVLAPVSHGAEIIAEGNIHIYAPLRGRALAGVHGNHDARIFCTCLEPELISIAGIYRTTENPLPADVLGKSVQIRLEEEKLMIEPLRLT</sequence>
<proteinExistence type="inferred from homology"/>
<reference key="1">
    <citation type="submission" date="2006-05" db="EMBL/GenBank/DDBJ databases">
        <title>Complete sequence of chromosome 1 of Burkholderia cenocepacia AU 1054.</title>
        <authorList>
            <consortium name="US DOE Joint Genome Institute"/>
            <person name="Copeland A."/>
            <person name="Lucas S."/>
            <person name="Lapidus A."/>
            <person name="Barry K."/>
            <person name="Detter J.C."/>
            <person name="Glavina del Rio T."/>
            <person name="Hammon N."/>
            <person name="Israni S."/>
            <person name="Dalin E."/>
            <person name="Tice H."/>
            <person name="Pitluck S."/>
            <person name="Chain P."/>
            <person name="Malfatti S."/>
            <person name="Shin M."/>
            <person name="Vergez L."/>
            <person name="Schmutz J."/>
            <person name="Larimer F."/>
            <person name="Land M."/>
            <person name="Hauser L."/>
            <person name="Kyrpides N."/>
            <person name="Lykidis A."/>
            <person name="LiPuma J.J."/>
            <person name="Konstantinidis K."/>
            <person name="Tiedje J.M."/>
            <person name="Richardson P."/>
        </authorList>
    </citation>
    <scope>NUCLEOTIDE SEQUENCE [LARGE SCALE GENOMIC DNA]</scope>
    <source>
        <strain>AU 1054</strain>
    </source>
</reference>
<dbReference type="EMBL" id="CP000378">
    <property type="protein sequence ID" value="ABF75416.1"/>
    <property type="molecule type" value="Genomic_DNA"/>
</dbReference>
<dbReference type="SMR" id="Q1BY89"/>
<dbReference type="HOGENOM" id="CLU_067812_0_1_4"/>
<dbReference type="GO" id="GO:0000902">
    <property type="term" value="P:cell morphogenesis"/>
    <property type="evidence" value="ECO:0007669"/>
    <property type="project" value="InterPro"/>
</dbReference>
<dbReference type="GO" id="GO:0000917">
    <property type="term" value="P:division septum assembly"/>
    <property type="evidence" value="ECO:0007669"/>
    <property type="project" value="UniProtKB-KW"/>
</dbReference>
<dbReference type="GO" id="GO:0051302">
    <property type="term" value="P:regulation of cell division"/>
    <property type="evidence" value="ECO:0007669"/>
    <property type="project" value="InterPro"/>
</dbReference>
<dbReference type="GO" id="GO:1901891">
    <property type="term" value="P:regulation of cell septum assembly"/>
    <property type="evidence" value="ECO:0007669"/>
    <property type="project" value="InterPro"/>
</dbReference>
<dbReference type="Gene3D" id="2.160.20.70">
    <property type="match status" value="1"/>
</dbReference>
<dbReference type="Gene3D" id="3.30.70.260">
    <property type="match status" value="1"/>
</dbReference>
<dbReference type="HAMAP" id="MF_00267">
    <property type="entry name" value="MinC"/>
    <property type="match status" value="1"/>
</dbReference>
<dbReference type="InterPro" id="IPR016098">
    <property type="entry name" value="CAP/MinC_C"/>
</dbReference>
<dbReference type="InterPro" id="IPR013033">
    <property type="entry name" value="MinC"/>
</dbReference>
<dbReference type="InterPro" id="IPR036145">
    <property type="entry name" value="MinC_C_sf"/>
</dbReference>
<dbReference type="InterPro" id="IPR007874">
    <property type="entry name" value="MinC_N"/>
</dbReference>
<dbReference type="InterPro" id="IPR005526">
    <property type="entry name" value="Septum_form_inhib_MinC_C"/>
</dbReference>
<dbReference type="NCBIfam" id="TIGR01222">
    <property type="entry name" value="minC"/>
    <property type="match status" value="1"/>
</dbReference>
<dbReference type="PANTHER" id="PTHR34108">
    <property type="entry name" value="SEPTUM SITE-DETERMINING PROTEIN MINC"/>
    <property type="match status" value="1"/>
</dbReference>
<dbReference type="PANTHER" id="PTHR34108:SF1">
    <property type="entry name" value="SEPTUM SITE-DETERMINING PROTEIN MINC"/>
    <property type="match status" value="1"/>
</dbReference>
<dbReference type="Pfam" id="PF03775">
    <property type="entry name" value="MinC_C"/>
    <property type="match status" value="1"/>
</dbReference>
<dbReference type="Pfam" id="PF05209">
    <property type="entry name" value="MinC_N"/>
    <property type="match status" value="1"/>
</dbReference>
<dbReference type="SUPFAM" id="SSF63848">
    <property type="entry name" value="Cell-division inhibitor MinC, C-terminal domain"/>
    <property type="match status" value="1"/>
</dbReference>
<accession>Q1BY89</accession>
<comment type="function">
    <text evidence="1">Cell division inhibitor that blocks the formation of polar Z ring septums. Rapidly oscillates between the poles of the cell to destabilize FtsZ filaments that have formed before they mature into polar Z rings. Prevents FtsZ polymerization.</text>
</comment>
<comment type="subunit">
    <text evidence="1">Interacts with MinD and FtsZ.</text>
</comment>
<comment type="similarity">
    <text evidence="1">Belongs to the MinC family.</text>
</comment>
<keyword id="KW-0131">Cell cycle</keyword>
<keyword id="KW-0132">Cell division</keyword>
<keyword id="KW-0717">Septation</keyword>
<gene>
    <name evidence="1" type="primary">minC</name>
    <name type="ordered locus">Bcen_0504</name>
</gene>
<feature type="chain" id="PRO_1000047807" description="Probable septum site-determining protein MinC">
    <location>
        <begin position="1"/>
        <end position="261"/>
    </location>
</feature>
<feature type="region of interest" description="Disordered" evidence="2">
    <location>
        <begin position="106"/>
        <end position="145"/>
    </location>
</feature>
<feature type="compositionally biased region" description="Low complexity" evidence="2">
    <location>
        <begin position="118"/>
        <end position="144"/>
    </location>
</feature>
<protein>
    <recommendedName>
        <fullName evidence="1">Probable septum site-determining protein MinC</fullName>
    </recommendedName>
</protein>
<organism>
    <name type="scientific">Burkholderia orbicola (strain AU 1054)</name>
    <dbReference type="NCBI Taxonomy" id="331271"/>
    <lineage>
        <taxon>Bacteria</taxon>
        <taxon>Pseudomonadati</taxon>
        <taxon>Pseudomonadota</taxon>
        <taxon>Betaproteobacteria</taxon>
        <taxon>Burkholderiales</taxon>
        <taxon>Burkholderiaceae</taxon>
        <taxon>Burkholderia</taxon>
        <taxon>Burkholderia cepacia complex</taxon>
        <taxon>Burkholderia orbicola</taxon>
    </lineage>
</organism>
<name>MINC_BURO1</name>
<evidence type="ECO:0000255" key="1">
    <source>
        <dbReference type="HAMAP-Rule" id="MF_00267"/>
    </source>
</evidence>
<evidence type="ECO:0000256" key="2">
    <source>
        <dbReference type="SAM" id="MobiDB-lite"/>
    </source>
</evidence>